<feature type="chain" id="PRO_0000171958" description="UPF0316 protein SH1041">
    <location>
        <begin position="1"/>
        <end position="202"/>
    </location>
</feature>
<feature type="transmembrane region" description="Helical" evidence="1">
    <location>
        <begin position="8"/>
        <end position="28"/>
    </location>
</feature>
<feature type="transmembrane region" description="Helical" evidence="1">
    <location>
        <begin position="40"/>
        <end position="60"/>
    </location>
</feature>
<feature type="transmembrane region" description="Helical" evidence="1">
    <location>
        <begin position="66"/>
        <end position="86"/>
    </location>
</feature>
<proteinExistence type="inferred from homology"/>
<sequence>MSVITSNPWSMVLAIFVINVFYVTFLTMRTILTLKGYRYMAAAVSFLEVLVYVVGLGMVMSSLDQIQNIFAYAFGFSIGILVGMKIEEKLALGYTVVNVTSSEYEIDLPNELRNLGYGVTHYAAHGRDGSRMVMQILTPRRYERKLMETVRNLDEKAFIIAYEPRAIHGGFWTKGVRTRKVKAYEVEEIESVVEHDDEVQSK</sequence>
<comment type="subcellular location">
    <subcellularLocation>
        <location evidence="1">Cell membrane</location>
        <topology evidence="1">Multi-pass membrane protein</topology>
    </subcellularLocation>
</comment>
<comment type="similarity">
    <text evidence="1">Belongs to the UPF0316 family.</text>
</comment>
<gene>
    <name type="ordered locus">SH1041</name>
</gene>
<dbReference type="EMBL" id="AP006716">
    <property type="protein sequence ID" value="BAE04350.1"/>
    <property type="molecule type" value="Genomic_DNA"/>
</dbReference>
<dbReference type="RefSeq" id="WP_011275347.1">
    <property type="nucleotide sequence ID" value="NC_007168.1"/>
</dbReference>
<dbReference type="SMR" id="Q4L7M5"/>
<dbReference type="KEGG" id="sha:SH1041"/>
<dbReference type="eggNOG" id="COG4843">
    <property type="taxonomic scope" value="Bacteria"/>
</dbReference>
<dbReference type="HOGENOM" id="CLU_106166_1_0_9"/>
<dbReference type="OrthoDB" id="48231at2"/>
<dbReference type="Proteomes" id="UP000000543">
    <property type="component" value="Chromosome"/>
</dbReference>
<dbReference type="GO" id="GO:0005886">
    <property type="term" value="C:plasma membrane"/>
    <property type="evidence" value="ECO:0007669"/>
    <property type="project" value="UniProtKB-SubCell"/>
</dbReference>
<dbReference type="CDD" id="cd16381">
    <property type="entry name" value="YitT_C_like_1"/>
    <property type="match status" value="1"/>
</dbReference>
<dbReference type="HAMAP" id="MF_01515">
    <property type="entry name" value="UPF0316"/>
    <property type="match status" value="1"/>
</dbReference>
<dbReference type="InterPro" id="IPR019264">
    <property type="entry name" value="DUF2179"/>
</dbReference>
<dbReference type="InterPro" id="IPR044035">
    <property type="entry name" value="DUF5698"/>
</dbReference>
<dbReference type="InterPro" id="IPR022930">
    <property type="entry name" value="UPF0316"/>
</dbReference>
<dbReference type="NCBIfam" id="NF003190">
    <property type="entry name" value="PRK04164.1-1"/>
    <property type="match status" value="1"/>
</dbReference>
<dbReference type="NCBIfam" id="NF003194">
    <property type="entry name" value="PRK04164.1-5"/>
    <property type="match status" value="1"/>
</dbReference>
<dbReference type="PANTHER" id="PTHR40060">
    <property type="entry name" value="UPF0316 PROTEIN YEBE"/>
    <property type="match status" value="1"/>
</dbReference>
<dbReference type="PANTHER" id="PTHR40060:SF1">
    <property type="entry name" value="UPF0316 PROTEIN YEBE"/>
    <property type="match status" value="1"/>
</dbReference>
<dbReference type="Pfam" id="PF10035">
    <property type="entry name" value="DUF2179"/>
    <property type="match status" value="1"/>
</dbReference>
<dbReference type="Pfam" id="PF18955">
    <property type="entry name" value="DUF5698"/>
    <property type="match status" value="1"/>
</dbReference>
<protein>
    <recommendedName>
        <fullName evidence="1">UPF0316 protein SH1041</fullName>
    </recommendedName>
</protein>
<accession>Q4L7M5</accession>
<organism>
    <name type="scientific">Staphylococcus haemolyticus (strain JCSC1435)</name>
    <dbReference type="NCBI Taxonomy" id="279808"/>
    <lineage>
        <taxon>Bacteria</taxon>
        <taxon>Bacillati</taxon>
        <taxon>Bacillota</taxon>
        <taxon>Bacilli</taxon>
        <taxon>Bacillales</taxon>
        <taxon>Staphylococcaceae</taxon>
        <taxon>Staphylococcus</taxon>
    </lineage>
</organism>
<keyword id="KW-1003">Cell membrane</keyword>
<keyword id="KW-0472">Membrane</keyword>
<keyword id="KW-0812">Transmembrane</keyword>
<keyword id="KW-1133">Transmembrane helix</keyword>
<reference key="1">
    <citation type="journal article" date="2005" name="J. Bacteriol.">
        <title>Whole-genome sequencing of Staphylococcus haemolyticus uncovers the extreme plasticity of its genome and the evolution of human-colonizing staphylococcal species.</title>
        <authorList>
            <person name="Takeuchi F."/>
            <person name="Watanabe S."/>
            <person name="Baba T."/>
            <person name="Yuzawa H."/>
            <person name="Ito T."/>
            <person name="Morimoto Y."/>
            <person name="Kuroda M."/>
            <person name="Cui L."/>
            <person name="Takahashi M."/>
            <person name="Ankai A."/>
            <person name="Baba S."/>
            <person name="Fukui S."/>
            <person name="Lee J.C."/>
            <person name="Hiramatsu K."/>
        </authorList>
    </citation>
    <scope>NUCLEOTIDE SEQUENCE [LARGE SCALE GENOMIC DNA]</scope>
    <source>
        <strain>JCSC1435</strain>
    </source>
</reference>
<name>Y1041_STAHJ</name>
<evidence type="ECO:0000255" key="1">
    <source>
        <dbReference type="HAMAP-Rule" id="MF_01515"/>
    </source>
</evidence>